<dbReference type="EMBL" id="AF375462">
    <property type="protein sequence ID" value="AAK56957.1"/>
    <property type="molecule type" value="mRNA"/>
</dbReference>
<dbReference type="EMBL" id="AF375467">
    <property type="protein sequence ID" value="AAK56962.1"/>
    <property type="molecule type" value="mRNA"/>
</dbReference>
<dbReference type="EMBL" id="U20110">
    <property type="protein sequence ID" value="AAA87728.1"/>
    <property type="status" value="ALT_INIT"/>
    <property type="molecule type" value="Genomic_DNA"/>
</dbReference>
<dbReference type="PIR" id="S58403">
    <property type="entry name" value="S58403"/>
</dbReference>
<dbReference type="RefSeq" id="NP_445777.1">
    <property type="nucleotide sequence ID" value="NM_053325.1"/>
</dbReference>
<dbReference type="SMR" id="Q925B4"/>
<dbReference type="FunCoup" id="Q925B4">
    <property type="interactions" value="5"/>
</dbReference>
<dbReference type="STRING" id="10116.ENSRNOP00000027454"/>
<dbReference type="PhosphoSitePlus" id="Q925B4"/>
<dbReference type="PaxDb" id="10116-ENSRNOP00000027454"/>
<dbReference type="GeneID" id="60566"/>
<dbReference type="KEGG" id="rno:60566"/>
<dbReference type="UCSC" id="RGD:68399">
    <property type="organism name" value="rat"/>
</dbReference>
<dbReference type="AGR" id="RGD:68399"/>
<dbReference type="CTD" id="90019"/>
<dbReference type="RGD" id="68399">
    <property type="gene designation" value="Syt8"/>
</dbReference>
<dbReference type="eggNOG" id="KOG1028">
    <property type="taxonomic scope" value="Eukaryota"/>
</dbReference>
<dbReference type="InParanoid" id="Q925B4"/>
<dbReference type="PhylomeDB" id="Q925B4"/>
<dbReference type="Reactome" id="R-RNO-8856825">
    <property type="pathway name" value="Cargo recognition for clathrin-mediated endocytosis"/>
</dbReference>
<dbReference type="Reactome" id="R-RNO-8856828">
    <property type="pathway name" value="Clathrin-mediated endocytosis"/>
</dbReference>
<dbReference type="PRO" id="PR:Q925B4"/>
<dbReference type="Proteomes" id="UP000002494">
    <property type="component" value="Unplaced"/>
</dbReference>
<dbReference type="GO" id="GO:0001669">
    <property type="term" value="C:acrosomal vesicle"/>
    <property type="evidence" value="ECO:0007669"/>
    <property type="project" value="UniProtKB-SubCell"/>
</dbReference>
<dbReference type="GO" id="GO:0030424">
    <property type="term" value="C:axon"/>
    <property type="evidence" value="ECO:0000318"/>
    <property type="project" value="GO_Central"/>
</dbReference>
<dbReference type="GO" id="GO:0005737">
    <property type="term" value="C:cytoplasm"/>
    <property type="evidence" value="ECO:0000266"/>
    <property type="project" value="RGD"/>
</dbReference>
<dbReference type="GO" id="GO:0031045">
    <property type="term" value="C:dense core granule"/>
    <property type="evidence" value="ECO:0000318"/>
    <property type="project" value="GO_Central"/>
</dbReference>
<dbReference type="GO" id="GO:0070382">
    <property type="term" value="C:exocytic vesicle"/>
    <property type="evidence" value="ECO:0000318"/>
    <property type="project" value="GO_Central"/>
</dbReference>
<dbReference type="GO" id="GO:0005886">
    <property type="term" value="C:plasma membrane"/>
    <property type="evidence" value="ECO:0000318"/>
    <property type="project" value="GO_Central"/>
</dbReference>
<dbReference type="GO" id="GO:0030672">
    <property type="term" value="C:synaptic vesicle membrane"/>
    <property type="evidence" value="ECO:0000318"/>
    <property type="project" value="GO_Central"/>
</dbReference>
<dbReference type="GO" id="GO:0031982">
    <property type="term" value="C:vesicle"/>
    <property type="evidence" value="ECO:0000266"/>
    <property type="project" value="RGD"/>
</dbReference>
<dbReference type="GO" id="GO:0061891">
    <property type="term" value="F:calcium ion sensor activity"/>
    <property type="evidence" value="ECO:0000318"/>
    <property type="project" value="GO_Central"/>
</dbReference>
<dbReference type="GO" id="GO:0048306">
    <property type="term" value="F:calcium-dependent protein binding"/>
    <property type="evidence" value="ECO:0000266"/>
    <property type="project" value="RGD"/>
</dbReference>
<dbReference type="GO" id="GO:0030276">
    <property type="term" value="F:clathrin binding"/>
    <property type="evidence" value="ECO:0000314"/>
    <property type="project" value="BHF-UCL"/>
</dbReference>
<dbReference type="GO" id="GO:0000149">
    <property type="term" value="F:SNARE binding"/>
    <property type="evidence" value="ECO:0000318"/>
    <property type="project" value="GO_Central"/>
</dbReference>
<dbReference type="GO" id="GO:0007340">
    <property type="term" value="P:acrosome reaction"/>
    <property type="evidence" value="ECO:0000266"/>
    <property type="project" value="RGD"/>
</dbReference>
<dbReference type="GO" id="GO:0099502">
    <property type="term" value="P:calcium-dependent activation of synaptic vesicle fusion"/>
    <property type="evidence" value="ECO:0000318"/>
    <property type="project" value="GO_Central"/>
</dbReference>
<dbReference type="GO" id="GO:0017158">
    <property type="term" value="P:regulation of calcium ion-dependent exocytosis"/>
    <property type="evidence" value="ECO:0000318"/>
    <property type="project" value="GO_Central"/>
</dbReference>
<dbReference type="GO" id="GO:2000300">
    <property type="term" value="P:regulation of synaptic vesicle exocytosis"/>
    <property type="evidence" value="ECO:0000318"/>
    <property type="project" value="GO_Central"/>
</dbReference>
<dbReference type="GO" id="GO:0016192">
    <property type="term" value="P:vesicle-mediated transport"/>
    <property type="evidence" value="ECO:0000318"/>
    <property type="project" value="GO_Central"/>
</dbReference>
<dbReference type="FunFam" id="2.60.40.150:FF:000176">
    <property type="entry name" value="Synaptotagmin 8"/>
    <property type="match status" value="1"/>
</dbReference>
<dbReference type="FunFam" id="2.60.40.150:FF:000182">
    <property type="entry name" value="Synaptotagmin 8"/>
    <property type="match status" value="1"/>
</dbReference>
<dbReference type="Gene3D" id="2.60.40.150">
    <property type="entry name" value="C2 domain"/>
    <property type="match status" value="2"/>
</dbReference>
<dbReference type="InterPro" id="IPR000008">
    <property type="entry name" value="C2_dom"/>
</dbReference>
<dbReference type="InterPro" id="IPR035892">
    <property type="entry name" value="C2_domain_sf"/>
</dbReference>
<dbReference type="InterPro" id="IPR001565">
    <property type="entry name" value="Synaptotagmin"/>
</dbReference>
<dbReference type="PANTHER" id="PTHR10024">
    <property type="entry name" value="SYNAPTOTAGMIN"/>
    <property type="match status" value="1"/>
</dbReference>
<dbReference type="PANTHER" id="PTHR10024:SF249">
    <property type="entry name" value="SYNAPTOTAGMIN-8"/>
    <property type="match status" value="1"/>
</dbReference>
<dbReference type="Pfam" id="PF00168">
    <property type="entry name" value="C2"/>
    <property type="match status" value="2"/>
</dbReference>
<dbReference type="PRINTS" id="PR00399">
    <property type="entry name" value="SYNAPTOTAGMN"/>
</dbReference>
<dbReference type="SMART" id="SM00239">
    <property type="entry name" value="C2"/>
    <property type="match status" value="2"/>
</dbReference>
<dbReference type="SUPFAM" id="SSF49562">
    <property type="entry name" value="C2 domain (Calcium/lipid-binding domain, CaLB)"/>
    <property type="match status" value="2"/>
</dbReference>
<dbReference type="PROSITE" id="PS50004">
    <property type="entry name" value="C2"/>
    <property type="match status" value="2"/>
</dbReference>
<keyword id="KW-1003">Cell membrane</keyword>
<keyword id="KW-0968">Cytoplasmic vesicle</keyword>
<keyword id="KW-0472">Membrane</keyword>
<keyword id="KW-1185">Reference proteome</keyword>
<keyword id="KW-0677">Repeat</keyword>
<keyword id="KW-0735">Signal-anchor</keyword>
<keyword id="KW-0812">Transmembrane</keyword>
<keyword id="KW-1133">Transmembrane helix</keyword>
<sequence>MQADRSMKMGHVSNPLSTSAPVDATAGPNLIPDLITKIPWPRWILFIAILAAGVLLVSCLLCVICYCCHRQRHRKQPKDKETVGLGSARNSTTTHLVQPDVECLEPCSGGDQPWGQLLLSLEYDFGSQEIRVGLRQAKNLKAEGTADPYARVSVSTQAGRRHETKVHRGTLCPMFEETCCFLVPPAELPKATLKVQLLDFKRFSEHEPLGELQLPLGTVDLQHVLESWYQLGPPGSTESEQMGELCFSLRYVPSSGRLTVVILEARGLNPGLAEAYVKVQLILNQRKWKKNKTSSKKGTTNPYFNEAFVFLVPVSQLQSMDLVLAVWARGLQLLAEPVGKVLLGPRASGQPLQHWADMLAHARRPIAQWHHLRSPREVDRALALQPRLPLLRPRS</sequence>
<accession>Q925B4</accession>
<accession>Q62749</accession>
<accession>Q925B9</accession>
<organism>
    <name type="scientific">Rattus norvegicus</name>
    <name type="common">Rat</name>
    <dbReference type="NCBI Taxonomy" id="10116"/>
    <lineage>
        <taxon>Eukaryota</taxon>
        <taxon>Metazoa</taxon>
        <taxon>Chordata</taxon>
        <taxon>Craniata</taxon>
        <taxon>Vertebrata</taxon>
        <taxon>Euteleostomi</taxon>
        <taxon>Mammalia</taxon>
        <taxon>Eutheria</taxon>
        <taxon>Euarchontoglires</taxon>
        <taxon>Glires</taxon>
        <taxon>Rodentia</taxon>
        <taxon>Myomorpha</taxon>
        <taxon>Muroidea</taxon>
        <taxon>Muridae</taxon>
        <taxon>Murinae</taxon>
        <taxon>Rattus</taxon>
    </lineage>
</organism>
<proteinExistence type="evidence at transcript level"/>
<gene>
    <name type="primary">Syt8</name>
</gene>
<comment type="function">
    <text evidence="2 5">Involved in the trafficking and exocytosis of secretory vesicles in non-neuronal tissues. Mediates Ca(2+)-regulation of exocytosis acrosomal reaction in sperm. May mediate Ca(2+)-regulation of exocytosis in insulin secreted cells (By similarity).</text>
</comment>
<comment type="subunit">
    <text evidence="2">Homodimer or homooligomer. Homodimerization and homooligomerization do not depend on Ca(2+). Interacts with SYNCRIP isoform 2 C-terminus. Binds inositol 1,3,4,5-tetrakisphosphate (IP4). Binds to AP2 in a Ca(2+)-independent manner. Interacts with STX1A, STX1B and STX2; the interaction is Ca(2+)-dependent.</text>
</comment>
<comment type="subcellular location">
    <subcellularLocation>
        <location evidence="1">Cell membrane</location>
        <topology evidence="1">Single-pass type III membrane protein</topology>
    </subcellularLocation>
    <subcellularLocation>
        <location evidence="2">Cytoplasmic vesicle</location>
        <location evidence="2">Secretory vesicle</location>
        <location evidence="2">Acrosome</location>
    </subcellularLocation>
</comment>
<comment type="tissue specificity">
    <text evidence="5 6">Ubiquitous. Strongly expressed in heart, kidney, cerebral cortex, pancreas, and many insulin-secreting cells; lower expression in spleen. Broadly distributed in kidney.</text>
</comment>
<comment type="domain">
    <text evidence="1">The first C2 domain/C2A does not mediate Ca(2+)-dependent phospholipid binding.</text>
</comment>
<comment type="domain">
    <text evidence="1">The second C2 domain/C2B is responsible for SYNCRIP and inositol 1,3,4,5-tetrakisphosphate (IP4)-binding.</text>
</comment>
<comment type="similarity">
    <text evidence="7">Belongs to the synaptotagmin family.</text>
</comment>
<comment type="sequence caution" evidence="7">
    <conflict type="erroneous initiation">
        <sequence resource="EMBL-CDS" id="AAA87728"/>
    </conflict>
    <text>Truncated N-terminus.</text>
</comment>
<name>SYT8_RAT</name>
<feature type="chain" id="PRO_0000183961" description="Synaptotagmin-8">
    <location>
        <begin position="1"/>
        <end position="395"/>
    </location>
</feature>
<feature type="topological domain" description="Extracellular" evidence="3">
    <location>
        <begin position="1"/>
        <end position="44"/>
    </location>
</feature>
<feature type="transmembrane region" description="Helical; Signal-anchor for type III membrane protein" evidence="3">
    <location>
        <begin position="45"/>
        <end position="65"/>
    </location>
</feature>
<feature type="topological domain" description="Cytoplasmic" evidence="3">
    <location>
        <begin position="66"/>
        <end position="395"/>
    </location>
</feature>
<feature type="domain" description="C2 1" evidence="4">
    <location>
        <begin position="113"/>
        <end position="229"/>
    </location>
</feature>
<feature type="domain" description="C2 2" evidence="4">
    <location>
        <begin position="241"/>
        <end position="370"/>
    </location>
</feature>
<feature type="sequence conflict" description="In Ref. 2; AAA87728." evidence="7" ref="2">
    <original>E</original>
    <variation>D</variation>
    <location>
        <position position="102"/>
    </location>
</feature>
<feature type="sequence conflict" description="In Ref. 2; AAA87728." evidence="7" ref="2">
    <original>Q</original>
    <variation>R</variation>
    <location>
        <position position="222"/>
    </location>
</feature>
<feature type="sequence conflict" description="In Ref. 1; AAK56957." evidence="7" ref="1">
    <original>M</original>
    <variation>V</variation>
    <location>
        <position position="320"/>
    </location>
</feature>
<evidence type="ECO:0000250" key="1"/>
<evidence type="ECO:0000250" key="2">
    <source>
        <dbReference type="UniProtKB" id="Q9R0N6"/>
    </source>
</evidence>
<evidence type="ECO:0000255" key="3"/>
<evidence type="ECO:0000255" key="4">
    <source>
        <dbReference type="PROSITE-ProRule" id="PRU00041"/>
    </source>
</evidence>
<evidence type="ECO:0000269" key="5">
    <source>
    </source>
</evidence>
<evidence type="ECO:0000269" key="6">
    <source>
    </source>
</evidence>
<evidence type="ECO:0000305" key="7"/>
<protein>
    <recommendedName>
        <fullName>Synaptotagmin-8</fullName>
    </recommendedName>
    <alternativeName>
        <fullName>Synaptotagmin VIII</fullName>
        <shortName>SytVIII</shortName>
    </alternativeName>
</protein>
<reference key="1">
    <citation type="submission" date="2001-05" db="EMBL/GenBank/DDBJ databases">
        <authorList>
            <person name="Shin O.-H."/>
            <person name="Suedhof T.C."/>
        </authorList>
    </citation>
    <scope>NUCLEOTIDE SEQUENCE [MRNA]</scope>
</reference>
<reference key="2">
    <citation type="journal article" date="1995" name="Nature">
        <title>Ca(2+)-dependent and -independent activities of neural and non-neural synaptotagmins.</title>
        <authorList>
            <person name="Li C."/>
            <person name="Ullrich B."/>
            <person name="Zhang J.Z."/>
            <person name="Anderson R.G.W."/>
            <person name="Brose N."/>
            <person name="Suedhof T.C."/>
        </authorList>
    </citation>
    <scope>NUCLEOTIDE SEQUENCE [GENOMIC DNA] OF 97-229</scope>
</reference>
<reference key="3">
    <citation type="journal article" date="1998" name="Am. J. Physiol.">
        <title>Expression of synaptotagmin VIII in rat kidney.</title>
        <authorList>
            <person name="Kishore B.K."/>
            <person name="Wade J.B."/>
            <person name="Schorr K."/>
            <person name="Inoue T."/>
            <person name="Mandon B."/>
            <person name="Knepper M.A."/>
        </authorList>
    </citation>
    <scope>TISSUE SPECIFICITY</scope>
</reference>
<reference key="4">
    <citation type="journal article" date="2001" name="J. Cell Sci.">
        <title>Expression and localisation of synaptotagmin isoforms in endocrine beta-cells: their function in insulin exocytosis.</title>
        <authorList>
            <person name="Gut A."/>
            <person name="Kiraly C.E."/>
            <person name="Fukuda M."/>
            <person name="Mikoshiba K."/>
            <person name="Wollheim C.B."/>
            <person name="Lang J."/>
        </authorList>
    </citation>
    <scope>FUNCTION</scope>
    <scope>TISSUE SPECIFICITY</scope>
</reference>